<organism>
    <name type="scientific">Methanococcus maripaludis (strain C5 / ATCC BAA-1333)</name>
    <dbReference type="NCBI Taxonomy" id="402880"/>
    <lineage>
        <taxon>Archaea</taxon>
        <taxon>Methanobacteriati</taxon>
        <taxon>Methanobacteriota</taxon>
        <taxon>Methanomada group</taxon>
        <taxon>Methanococci</taxon>
        <taxon>Methanococcales</taxon>
        <taxon>Methanococcaceae</taxon>
        <taxon>Methanococcus</taxon>
    </lineage>
</organism>
<accession>A4FWB4</accession>
<evidence type="ECO:0000255" key="1">
    <source>
        <dbReference type="HAMAP-Rule" id="MF_00604"/>
    </source>
</evidence>
<keyword id="KW-0648">Protein biosynthesis</keyword>
<keyword id="KW-0810">Translation regulation</keyword>
<protein>
    <recommendedName>
        <fullName evidence="1">Protein translation factor SUI1 homolog</fullName>
    </recommendedName>
</protein>
<gene>
    <name type="ordered locus">MmarC5_0172</name>
</gene>
<proteinExistence type="inferred from homology"/>
<sequence>MPEICPICGLPKDLCVCEEIAKEEQKIKVYVTKRRFGKLMTVVDGFDADLIDVKDLAKKLKDICACGGTVKKDSIELQGDHRRKAEETLIKMGFSKDMIDVR</sequence>
<comment type="similarity">
    <text evidence="1">Belongs to the SUI1 family.</text>
</comment>
<name>SUI1_METM5</name>
<dbReference type="EMBL" id="CP000609">
    <property type="protein sequence ID" value="ABO34489.1"/>
    <property type="molecule type" value="Genomic_DNA"/>
</dbReference>
<dbReference type="SMR" id="A4FWB4"/>
<dbReference type="STRING" id="402880.MmarC5_0172"/>
<dbReference type="GeneID" id="4928814"/>
<dbReference type="KEGG" id="mmq:MmarC5_0172"/>
<dbReference type="eggNOG" id="arCOG04223">
    <property type="taxonomic scope" value="Archaea"/>
</dbReference>
<dbReference type="HOGENOM" id="CLU_082805_6_1_2"/>
<dbReference type="OrthoDB" id="11182at2157"/>
<dbReference type="Proteomes" id="UP000000253">
    <property type="component" value="Chromosome"/>
</dbReference>
<dbReference type="GO" id="GO:0003729">
    <property type="term" value="F:mRNA binding"/>
    <property type="evidence" value="ECO:0007669"/>
    <property type="project" value="TreeGrafter"/>
</dbReference>
<dbReference type="GO" id="GO:0003743">
    <property type="term" value="F:translation initiation factor activity"/>
    <property type="evidence" value="ECO:0007669"/>
    <property type="project" value="InterPro"/>
</dbReference>
<dbReference type="GO" id="GO:0001731">
    <property type="term" value="P:formation of translation preinitiation complex"/>
    <property type="evidence" value="ECO:0007669"/>
    <property type="project" value="TreeGrafter"/>
</dbReference>
<dbReference type="GO" id="GO:0006417">
    <property type="term" value="P:regulation of translation"/>
    <property type="evidence" value="ECO:0007669"/>
    <property type="project" value="UniProtKB-UniRule"/>
</dbReference>
<dbReference type="GO" id="GO:0002188">
    <property type="term" value="P:translation reinitiation"/>
    <property type="evidence" value="ECO:0007669"/>
    <property type="project" value="TreeGrafter"/>
</dbReference>
<dbReference type="CDD" id="cd11567">
    <property type="entry name" value="YciH_like"/>
    <property type="match status" value="1"/>
</dbReference>
<dbReference type="Gene3D" id="3.30.780.10">
    <property type="entry name" value="SUI1-like domain"/>
    <property type="match status" value="1"/>
</dbReference>
<dbReference type="HAMAP" id="MF_00604">
    <property type="entry name" value="SUI1"/>
    <property type="match status" value="1"/>
</dbReference>
<dbReference type="InterPro" id="IPR050318">
    <property type="entry name" value="DENR/SUI1_TIF"/>
</dbReference>
<dbReference type="InterPro" id="IPR001950">
    <property type="entry name" value="SUI1"/>
</dbReference>
<dbReference type="InterPro" id="IPR022851">
    <property type="entry name" value="SUI1_arc"/>
</dbReference>
<dbReference type="InterPro" id="IPR005872">
    <property type="entry name" value="SUI1_arc_bac"/>
</dbReference>
<dbReference type="InterPro" id="IPR036877">
    <property type="entry name" value="SUI1_dom_sf"/>
</dbReference>
<dbReference type="NCBIfam" id="NF002096">
    <property type="entry name" value="PRK00939.1"/>
    <property type="match status" value="1"/>
</dbReference>
<dbReference type="NCBIfam" id="TIGR01158">
    <property type="entry name" value="SUI1_rel"/>
    <property type="match status" value="1"/>
</dbReference>
<dbReference type="PANTHER" id="PTHR12789:SF0">
    <property type="entry name" value="DENSITY-REGULATED PROTEIN"/>
    <property type="match status" value="1"/>
</dbReference>
<dbReference type="PANTHER" id="PTHR12789">
    <property type="entry name" value="DENSITY-REGULATED PROTEIN HOMOLOG"/>
    <property type="match status" value="1"/>
</dbReference>
<dbReference type="Pfam" id="PF01253">
    <property type="entry name" value="SUI1"/>
    <property type="match status" value="1"/>
</dbReference>
<dbReference type="PIRSF" id="PIRSF037511">
    <property type="entry name" value="Transl_init_SUI1_pro"/>
    <property type="match status" value="1"/>
</dbReference>
<dbReference type="SUPFAM" id="SSF55159">
    <property type="entry name" value="eIF1-like"/>
    <property type="match status" value="1"/>
</dbReference>
<dbReference type="PROSITE" id="PS50296">
    <property type="entry name" value="SUI1"/>
    <property type="match status" value="1"/>
</dbReference>
<reference key="1">
    <citation type="submission" date="2007-03" db="EMBL/GenBank/DDBJ databases">
        <title>Complete sequence of chromosome of Methanococcus maripaludis C5.</title>
        <authorList>
            <consortium name="US DOE Joint Genome Institute"/>
            <person name="Copeland A."/>
            <person name="Lucas S."/>
            <person name="Lapidus A."/>
            <person name="Barry K."/>
            <person name="Glavina del Rio T."/>
            <person name="Dalin E."/>
            <person name="Tice H."/>
            <person name="Pitluck S."/>
            <person name="Chertkov O."/>
            <person name="Brettin T."/>
            <person name="Bruce D."/>
            <person name="Han C."/>
            <person name="Detter J.C."/>
            <person name="Schmutz J."/>
            <person name="Larimer F."/>
            <person name="Land M."/>
            <person name="Hauser L."/>
            <person name="Kyrpides N."/>
            <person name="Mikhailova N."/>
            <person name="Sieprawska-Lupa M."/>
            <person name="Whitman W.B."/>
            <person name="Richardson P."/>
        </authorList>
    </citation>
    <scope>NUCLEOTIDE SEQUENCE [LARGE SCALE GENOMIC DNA]</scope>
    <source>
        <strain>C5 / ATCC BAA-1333</strain>
    </source>
</reference>
<feature type="chain" id="PRO_1000006435" description="Protein translation factor SUI1 homolog">
    <location>
        <begin position="1"/>
        <end position="102"/>
    </location>
</feature>